<keyword id="KW-0027">Amidation</keyword>
<keyword id="KW-0165">Cleavage on pair of basic residues</keyword>
<keyword id="KW-0528">Neurotoxin</keyword>
<keyword id="KW-0964">Secreted</keyword>
<keyword id="KW-0732">Signal</keyword>
<keyword id="KW-0800">Toxin</keyword>
<name>CT0C3_CONVE</name>
<comment type="subcellular location">
    <subcellularLocation>
        <location evidence="1">Secreted</location>
    </subcellularLocation>
</comment>
<comment type="tissue specificity">
    <text>Expressed by the venom duct.</text>
</comment>
<comment type="miscellaneous">
    <text>The mature peptide does not contain cysteine residue.</text>
</comment>
<comment type="similarity">
    <text evidence="3">Belongs to the conotoxin T superfamily.</text>
</comment>
<sequence>MLCLPVFIILLLLASPAAPNPLQTRIQSNLIRAGPEDANIKTDKRIFAGLLASILKPIIDAAKG</sequence>
<dbReference type="EMBL" id="AF215000">
    <property type="protein sequence ID" value="AAG60428.1"/>
    <property type="molecule type" value="mRNA"/>
</dbReference>
<dbReference type="ConoServer" id="687">
    <property type="toxin name" value="VnMLCL-05 precursor"/>
</dbReference>
<dbReference type="GO" id="GO:0005576">
    <property type="term" value="C:extracellular region"/>
    <property type="evidence" value="ECO:0007669"/>
    <property type="project" value="UniProtKB-SubCell"/>
</dbReference>
<dbReference type="GO" id="GO:0090729">
    <property type="term" value="F:toxin activity"/>
    <property type="evidence" value="ECO:0007669"/>
    <property type="project" value="UniProtKB-KW"/>
</dbReference>
<reference key="1">
    <citation type="journal article" date="2001" name="Mol. Biol. Evol.">
        <title>Mechanisms for evolving hypervariability: the case of conopeptides.</title>
        <authorList>
            <person name="Conticello S.G."/>
            <person name="Gilad Y."/>
            <person name="Avidan N."/>
            <person name="Ben-Asher E."/>
            <person name="Levy Z."/>
            <person name="Fainzilber M."/>
        </authorList>
    </citation>
    <scope>NUCLEOTIDE SEQUENCE [MRNA]</scope>
    <source>
        <tissue>Venom duct</tissue>
    </source>
</reference>
<organism>
    <name type="scientific">Conus ventricosus</name>
    <name type="common">Mediterranean cone</name>
    <dbReference type="NCBI Taxonomy" id="117992"/>
    <lineage>
        <taxon>Eukaryota</taxon>
        <taxon>Metazoa</taxon>
        <taxon>Spiralia</taxon>
        <taxon>Lophotrochozoa</taxon>
        <taxon>Mollusca</taxon>
        <taxon>Gastropoda</taxon>
        <taxon>Caenogastropoda</taxon>
        <taxon>Neogastropoda</taxon>
        <taxon>Conoidea</taxon>
        <taxon>Conidae</taxon>
        <taxon>Conus</taxon>
        <taxon>Lautoconus</taxon>
    </lineage>
</organism>
<feature type="signal peptide" evidence="2">
    <location>
        <begin position="1"/>
        <end position="19"/>
    </location>
</feature>
<feature type="propeptide" id="PRO_0000404987" evidence="2">
    <location>
        <begin position="20"/>
        <end position="43"/>
    </location>
</feature>
<feature type="peptide" id="PRO_0000404988" description="Conotoxin VnMLCL-05" evidence="2">
    <location>
        <begin position="46"/>
        <end position="63"/>
    </location>
</feature>
<feature type="modified residue" description="Lysine amide" evidence="1">
    <location>
        <position position="63"/>
    </location>
</feature>
<evidence type="ECO:0000250" key="1"/>
<evidence type="ECO:0000255" key="2"/>
<evidence type="ECO:0000305" key="3"/>
<proteinExistence type="evidence at transcript level"/>
<accession>Q9BPD4</accession>
<protein>
    <recommendedName>
        <fullName>Conotoxin VnMLCL-05</fullName>
    </recommendedName>
</protein>